<gene>
    <name evidence="9 11" type="primary">Gbp3</name>
</gene>
<proteinExistence type="evidence at protein level"/>
<keyword id="KW-0175">Coiled coil</keyword>
<keyword id="KW-0963">Cytoplasm</keyword>
<keyword id="KW-0333">Golgi apparatus</keyword>
<keyword id="KW-0342">GTP-binding</keyword>
<keyword id="KW-0378">Hydrolase</keyword>
<keyword id="KW-0391">Immunity</keyword>
<keyword id="KW-0399">Innate immunity</keyword>
<keyword id="KW-0472">Membrane</keyword>
<keyword id="KW-0547">Nucleotide-binding</keyword>
<keyword id="KW-1185">Reference proteome</keyword>
<reference key="1">
    <citation type="journal article" date="1998" name="Biochim. Biophys. Acta">
        <title>Cloning, expression, and characterization of a novel guanylate-binding protein, GBP3 in murine erythroid progenitor cells.</title>
        <authorList>
            <person name="Han B.H."/>
            <person name="Park D.J."/>
            <person name="Lim R.W."/>
            <person name="Im J.H."/>
            <person name="Kim H.D."/>
        </authorList>
    </citation>
    <scope>NUCLEOTIDE SEQUENCE [MRNA]</scope>
    <scope>FUNCTION</scope>
    <scope>GTPASE ACTIVITY</scope>
    <scope>INDUCTION</scope>
    <scope>SUBCELLULAR LOCATION</scope>
    <scope>BIOPHYSICOCHEMICAL PROPERTIES</scope>
    <scope>TISSUE SPECIFICITY</scope>
    <source>
        <strain>BALB/cJ</strain>
        <tissue>Spleen</tissue>
    </source>
</reference>
<reference key="2">
    <citation type="journal article" date="2004" name="Genome Res.">
        <title>The status, quality, and expansion of the NIH full-length cDNA project: the Mammalian Gene Collection (MGC).</title>
        <authorList>
            <consortium name="The MGC Project Team"/>
        </authorList>
    </citation>
    <scope>NUCLEOTIDE SEQUENCE [LARGE SCALE MRNA]</scope>
    <source>
        <strain>Czech II</strain>
        <tissue>Mammary gland</tissue>
    </source>
</reference>
<reference key="3">
    <citation type="journal article" date="2007" name="J. Immunol.">
        <title>Extensive characterization of IFN-induced GTPases mGBP1 to mGBP10 involved in host defense.</title>
        <authorList>
            <person name="Degrandi D."/>
            <person name="Konermann C."/>
            <person name="Beuter-Gunia C."/>
            <person name="Kresse A."/>
            <person name="Wurthner J."/>
            <person name="Kurig S."/>
            <person name="Beer S."/>
            <person name="Pfeffer K."/>
        </authorList>
    </citation>
    <scope>INDUCTION</scope>
</reference>
<reference key="4">
    <citation type="journal article" date="2010" name="Cell">
        <title>A tissue-specific atlas of mouse protein phosphorylation and expression.</title>
        <authorList>
            <person name="Huttlin E.L."/>
            <person name="Jedrychowski M.P."/>
            <person name="Elias J.E."/>
            <person name="Goswami T."/>
            <person name="Rad R."/>
            <person name="Beausoleil S.A."/>
            <person name="Villen J."/>
            <person name="Haas W."/>
            <person name="Sowa M.E."/>
            <person name="Gygi S.P."/>
        </authorList>
    </citation>
    <scope>IDENTIFICATION BY MASS SPECTROMETRY [LARGE SCALE ANALYSIS]</scope>
    <source>
        <tissue>Brown adipose tissue</tissue>
        <tissue>Heart</tissue>
        <tissue>Lung</tissue>
        <tissue>Pancreas</tissue>
        <tissue>Spleen</tissue>
    </source>
</reference>
<reference key="5">
    <citation type="journal article" date="2014" name="Nature">
        <title>Caspase-11 activation requires lysis of pathogen-containing vacuoles by IFN-induced GTPases.</title>
        <authorList>
            <person name="Meunier E."/>
            <person name="Dick M.S."/>
            <person name="Dreier R.F."/>
            <person name="Schuermann N."/>
            <person name="Kenzelmann Broz D."/>
            <person name="Warming S."/>
            <person name="Roose-Girma M."/>
            <person name="Bumann D."/>
            <person name="Kayagaki N."/>
            <person name="Takeda K."/>
            <person name="Yamamoto M."/>
            <person name="Broz P."/>
        </authorList>
    </citation>
    <scope>FUNCTION</scope>
</reference>
<reference key="6">
    <citation type="journal article" date="2014" name="Proc. Natl. Acad. Sci. U.S.A.">
        <title>Guanylate binding proteins promote caspase-11-dependent pyroptosis in response to cytoplasmic LPS.</title>
        <authorList>
            <person name="Pilla D.M."/>
            <person name="Hagar J.A."/>
            <person name="Haldar A.K."/>
            <person name="Mason A.K."/>
            <person name="Degrandi D."/>
            <person name="Pfeffer K."/>
            <person name="Ernst R.K."/>
            <person name="Yamamoto M."/>
            <person name="Miao E.A."/>
            <person name="Coers J."/>
        </authorList>
    </citation>
    <scope>FUNCTION</scope>
</reference>
<organism>
    <name type="scientific">Mus musculus</name>
    <name type="common">Mouse</name>
    <dbReference type="NCBI Taxonomy" id="10090"/>
    <lineage>
        <taxon>Eukaryota</taxon>
        <taxon>Metazoa</taxon>
        <taxon>Chordata</taxon>
        <taxon>Craniata</taxon>
        <taxon>Vertebrata</taxon>
        <taxon>Euteleostomi</taxon>
        <taxon>Mammalia</taxon>
        <taxon>Eutheria</taxon>
        <taxon>Euarchontoglires</taxon>
        <taxon>Glires</taxon>
        <taxon>Rodentia</taxon>
        <taxon>Myomorpha</taxon>
        <taxon>Muroidea</taxon>
        <taxon>Muridae</taxon>
        <taxon>Murinae</taxon>
        <taxon>Mus</taxon>
        <taxon>Mus</taxon>
    </lineage>
</organism>
<comment type="function">
    <text evidence="6 7 8">Interferon (IFN)-inducible GTPase that plays important roles in innate immunity against a diverse range of bacterial, viral and protozoan pathogens (PubMed:24715728, PubMed:24739961). Hydrolyzes GTP very efficiently; GDP rather than GMP is the major reaction product (PubMed:9659399). Following infection, recruited to the pathogen-containing vacuoles or vacuole-escaped bacteria and acts as a positive regulator of inflammasome assembly by promoting the release of inflammasome ligands from bacteria (PubMed:24715728, PubMed:24739961). Acts by promoting lysis of pathogen-containing vacuoles, releasing pathogens into the cytosol (PubMed:24715728, PubMed:24739961). Following pathogen release in the cytosol, promotes recruitment of proteins that mediate bacterial cytolysis, such as Gm12250/Irgb10: this liberates ligands that are detected by inflammasomes, such as lipopolysaccharide (LPS) that activates the non-canonical CASP4/CASP11 inflammasome or double-stranded DNA (dsDNA) that activates the AIM2 inflammasome (PubMed:24715728, PubMed:24739961). May play a role in erythroid differentiation (PubMed:9659399).</text>
</comment>
<comment type="catalytic activity">
    <reaction evidence="8">
        <text>GTP + H2O = GDP + phosphate + H(+)</text>
        <dbReference type="Rhea" id="RHEA:19669"/>
        <dbReference type="ChEBI" id="CHEBI:15377"/>
        <dbReference type="ChEBI" id="CHEBI:15378"/>
        <dbReference type="ChEBI" id="CHEBI:37565"/>
        <dbReference type="ChEBI" id="CHEBI:43474"/>
        <dbReference type="ChEBI" id="CHEBI:58189"/>
    </reaction>
</comment>
<comment type="biophysicochemical properties">
    <kinetics>
        <KM evidence="8">77 uM for GTP</KM>
        <Vmax evidence="8">21.0 pmol/min/ug enzyme</Vmax>
    </kinetics>
</comment>
<comment type="subunit">
    <text evidence="2">Heterodimer with other family members, including GBP1, GBP2 and GBP5. Dimerization regulates subcellular location.</text>
</comment>
<comment type="subcellular location">
    <subcellularLocation>
        <location evidence="2">Cytoplasm</location>
    </subcellularLocation>
    <subcellularLocation>
        <location evidence="2">Cytoplasm</location>
        <location evidence="2">Perinuclear region</location>
    </subcellularLocation>
    <subcellularLocation>
        <location evidence="2">Golgi apparatus membrane</location>
    </subcellularLocation>
    <text evidence="2">Heterodimers with GBP1, GBP2 and GBP5 localize in the compartment of the prenylated GBPs: with GBP1 in a vesicle-like compartment, with GBP2, around the nucleus and with GBP5, at the Golgi apparatus.</text>
</comment>
<comment type="tissue specificity">
    <text evidence="8">Brain, lung, heart, spleen, kidney, liver and intestine.</text>
</comment>
<comment type="induction">
    <text evidence="5 8">By IFNG/IFN-gamma, IFNB1/IFN-beta and TNF-alpha (PubMed:18025219, PubMed:9659399). Up-regulated upon infection by T.gondii or L.monocytogenes (PubMed:18025219).</text>
</comment>
<comment type="similarity">
    <text evidence="4">Belongs to the TRAFAC class dynamin-like GTPase superfamily. GB1/RHD3 GTPase family. GB1 subfamily.</text>
</comment>
<evidence type="ECO:0000250" key="1">
    <source>
        <dbReference type="UniProtKB" id="P32455"/>
    </source>
</evidence>
<evidence type="ECO:0000250" key="2">
    <source>
        <dbReference type="UniProtKB" id="Q9H0R5"/>
    </source>
</evidence>
<evidence type="ECO:0000255" key="3"/>
<evidence type="ECO:0000255" key="4">
    <source>
        <dbReference type="PROSITE-ProRule" id="PRU01052"/>
    </source>
</evidence>
<evidence type="ECO:0000269" key="5">
    <source>
    </source>
</evidence>
<evidence type="ECO:0000269" key="6">
    <source>
    </source>
</evidence>
<evidence type="ECO:0000269" key="7">
    <source>
    </source>
</evidence>
<evidence type="ECO:0000269" key="8">
    <source>
    </source>
</evidence>
<evidence type="ECO:0000303" key="9">
    <source>
    </source>
</evidence>
<evidence type="ECO:0000305" key="10"/>
<evidence type="ECO:0000312" key="11">
    <source>
        <dbReference type="MGI" id="MGI:1926263"/>
    </source>
</evidence>
<name>GBP3_MOUSE</name>
<sequence length="620" mass="70801">MEAPICLVENWKNQLTVNLEAIRILEQIAQPLVVVAIVGLYRTGKSYLMNRLAGRNHGFSLGSTVQSETKGIWMWCVPHPTKPTHTLVLLDTEGLGDVEKGDPKNDSWIFALAVLLSSTFVYNSMSTINQQALEQLHFVTELTQLIRAKSSPREDKVKDSSEFVGFFPDFIWAVRDFALELKLNGRPITEDEYLENALKLIQGDNLKVQQSNMTRECIRYFFPVRKCFVFDRPTSDKRLLLQIENVPENQLERNFQVESEKFCSYIFTNGKTKTLRGGVIVTGNRLGTLVQTYVNAINSGTVPCLENAVTTLAQRENSIAVQKAADHYSEQMAQRMRLPTDTLQELLTVHAACEKEAIAVFMEHSFKDDEQEFQKKLVVTIEERKEEFIRQNEAASIRHCQAELERLSESLRKSISCGAFSVPGGHSLYLEARKKIELGYQQVLRKGVKAKEVLKSFLQSQAIMEDSILQSDKALTDGERAIAAERTKKEVAEKELELLRQRQKEQEQVMEAQERSFRENIAKLQEKMESEKEMLLREQEKMLEHKLKVQEELLIEGFREKSDMLKNEISHLREEMERTRRKPSLFGQILDTIGNAFIMILPGAGKLFGVGLKFLGSLSS</sequence>
<feature type="chain" id="PRO_0000261160" description="Guanylate-binding protein 3">
    <location>
        <begin position="1"/>
        <end position="620"/>
    </location>
</feature>
<feature type="domain" description="GB1/RHD3-type G" evidence="4">
    <location>
        <begin position="29"/>
        <end position="271"/>
    </location>
</feature>
<feature type="region of interest" description="GTPase domain (Globular)" evidence="1">
    <location>
        <begin position="1"/>
        <end position="304"/>
    </location>
</feature>
<feature type="coiled-coil region" evidence="3">
    <location>
        <begin position="375"/>
        <end position="411"/>
    </location>
</feature>
<feature type="coiled-coil region" evidence="3">
    <location>
        <begin position="477"/>
        <end position="582"/>
    </location>
</feature>
<feature type="binding site" evidence="1">
    <location>
        <begin position="39"/>
        <end position="46"/>
    </location>
    <ligand>
        <name>GTP</name>
        <dbReference type="ChEBI" id="CHEBI:37565"/>
    </ligand>
</feature>
<feature type="binding site" evidence="1">
    <location>
        <begin position="61"/>
        <end position="63"/>
    </location>
    <ligand>
        <name>GTP</name>
        <dbReference type="ChEBI" id="CHEBI:37565"/>
    </ligand>
</feature>
<feature type="binding site" evidence="1">
    <location>
        <begin position="91"/>
        <end position="95"/>
    </location>
    <ligand>
        <name>GTP</name>
        <dbReference type="ChEBI" id="CHEBI:37565"/>
    </ligand>
</feature>
<feature type="sequence conflict" description="In Ref. 2; AAH19195." evidence="10" ref="2">
    <original>N</original>
    <variation>K</variation>
    <location>
        <position position="184"/>
    </location>
</feature>
<feature type="sequence conflict" description="In Ref. 2; AAH19195." evidence="10" ref="2">
    <original>K</original>
    <variation>R</variation>
    <location>
        <position position="199"/>
    </location>
</feature>
<feature type="sequence conflict" description="In Ref. 2; AAH19195." evidence="10" ref="2">
    <original>Q</original>
    <variation>P</variation>
    <location>
        <position position="202"/>
    </location>
</feature>
<feature type="sequence conflict" description="In Ref. 2; AAH19195." evidence="10" ref="2">
    <original>L</original>
    <variation>P</variation>
    <location>
        <position position="206"/>
    </location>
</feature>
<feature type="sequence conflict" description="In Ref. 2; AAH19195." evidence="10" ref="2">
    <original>M</original>
    <variation>V</variation>
    <location>
        <position position="336"/>
    </location>
</feature>
<feature type="sequence conflict" description="In Ref. 2; AAH19195." evidence="10" ref="2">
    <original>I</original>
    <variation>M</variation>
    <location>
        <position position="389"/>
    </location>
</feature>
<feature type="sequence conflict" description="In Ref. 2; AAH19195." evidence="10" ref="2">
    <original>L</original>
    <variation>P</variation>
    <location>
        <position position="444"/>
    </location>
</feature>
<feature type="sequence conflict" description="In Ref. 2; AAH19195." evidence="10" ref="2">
    <original>I</original>
    <variation>V</variation>
    <location>
        <position position="463"/>
    </location>
</feature>
<feature type="sequence conflict" description="In Ref. 2; AAH19195." evidence="10" ref="2">
    <original>I</original>
    <variation>T</variation>
    <location>
        <position position="555"/>
    </location>
</feature>
<feature type="sequence conflict" description="In Ref. 2; AAH19195." evidence="10" ref="2">
    <original>I</original>
    <variation>V</variation>
    <location>
        <position position="593"/>
    </location>
</feature>
<feature type="sequence conflict" description="In Ref. 2; AAH19195." evidence="10" ref="2">
    <original>S</original>
    <variation>N</variation>
    <location>
        <position position="620"/>
    </location>
</feature>
<accession>Q61107</accession>
<accession>Q8VEC5</accession>
<protein>
    <recommendedName>
        <fullName>Guanylate-binding protein 3</fullName>
        <ecNumber evidence="8">3.6.5.-</ecNumber>
    </recommendedName>
    <alternativeName>
        <fullName>GTP-binding protein 3</fullName>
        <shortName>GBP-3</shortName>
    </alternativeName>
    <alternativeName>
        <fullName>Guanine nucleotide-binding protein 3</fullName>
    </alternativeName>
</protein>
<dbReference type="EC" id="3.6.5.-" evidence="8"/>
<dbReference type="EMBL" id="U44731">
    <property type="protein sequence ID" value="AAA86645.1"/>
    <property type="molecule type" value="mRNA"/>
</dbReference>
<dbReference type="EMBL" id="BC019195">
    <property type="protein sequence ID" value="AAH19195.1"/>
    <property type="molecule type" value="mRNA"/>
</dbReference>
<dbReference type="CCDS" id="CCDS17879.1"/>
<dbReference type="RefSeq" id="NP_001276421.1">
    <property type="nucleotide sequence ID" value="NM_001289492.3"/>
</dbReference>
<dbReference type="RefSeq" id="NP_001276422.1">
    <property type="nucleotide sequence ID" value="NM_001289493.2"/>
</dbReference>
<dbReference type="RefSeq" id="NP_001342332.1">
    <property type="nucleotide sequence ID" value="NM_001355403.2"/>
</dbReference>
<dbReference type="RefSeq" id="NP_061204.3">
    <property type="nucleotide sequence ID" value="NM_018734.3"/>
</dbReference>
<dbReference type="RefSeq" id="XP_006501784.1">
    <property type="nucleotide sequence ID" value="XM_006501721.2"/>
</dbReference>
<dbReference type="RefSeq" id="XP_006501787.1">
    <property type="nucleotide sequence ID" value="XM_006501724.3"/>
</dbReference>
<dbReference type="SMR" id="Q61107"/>
<dbReference type="BioGRID" id="207732">
    <property type="interactions" value="3"/>
</dbReference>
<dbReference type="FunCoup" id="Q61107">
    <property type="interactions" value="106"/>
</dbReference>
<dbReference type="STRING" id="10090.ENSMUSP00000101828"/>
<dbReference type="GlyGen" id="Q61107">
    <property type="glycosylation" value="1 site, 1 N-linked glycan (1 site)"/>
</dbReference>
<dbReference type="iPTMnet" id="Q61107"/>
<dbReference type="PhosphoSitePlus" id="Q61107"/>
<dbReference type="jPOST" id="Q61107"/>
<dbReference type="PaxDb" id="10090-ENSMUSP00000101828"/>
<dbReference type="PeptideAtlas" id="Q61107"/>
<dbReference type="ProteomicsDB" id="267769"/>
<dbReference type="DNASU" id="55932"/>
<dbReference type="Ensembl" id="ENSMUST00000029935.14">
    <property type="protein sequence ID" value="ENSMUSP00000029935.8"/>
    <property type="gene ID" value="ENSMUSG00000028268.15"/>
</dbReference>
<dbReference type="Ensembl" id="ENSMUST00000106221.8">
    <property type="protein sequence ID" value="ENSMUSP00000101828.2"/>
    <property type="gene ID" value="ENSMUSG00000028268.15"/>
</dbReference>
<dbReference type="Ensembl" id="ENSMUST00000106222.9">
    <property type="protein sequence ID" value="ENSMUSP00000101829.3"/>
    <property type="gene ID" value="ENSMUSG00000028268.15"/>
</dbReference>
<dbReference type="GeneID" id="55932"/>
<dbReference type="KEGG" id="mmu:55932"/>
<dbReference type="UCSC" id="uc008rou.2">
    <property type="organism name" value="mouse"/>
</dbReference>
<dbReference type="AGR" id="MGI:1926263"/>
<dbReference type="CTD" id="2635"/>
<dbReference type="MGI" id="MGI:1926263">
    <property type="gene designation" value="Gbp3"/>
</dbReference>
<dbReference type="VEuPathDB" id="HostDB:ENSMUSG00000028268"/>
<dbReference type="eggNOG" id="KOG2037">
    <property type="taxonomic scope" value="Eukaryota"/>
</dbReference>
<dbReference type="GeneTree" id="ENSGT00940000163522"/>
<dbReference type="HOGENOM" id="CLU_018608_2_1_1"/>
<dbReference type="InParanoid" id="Q61107"/>
<dbReference type="OMA" id="MQSDNFC"/>
<dbReference type="OrthoDB" id="2135133at2759"/>
<dbReference type="PhylomeDB" id="Q61107"/>
<dbReference type="TreeFam" id="TF331602"/>
<dbReference type="SABIO-RK" id="Q61107"/>
<dbReference type="BioGRID-ORCS" id="55932">
    <property type="hits" value="1 hit in 76 CRISPR screens"/>
</dbReference>
<dbReference type="ChiTaRS" id="Gbp4">
    <property type="organism name" value="mouse"/>
</dbReference>
<dbReference type="PRO" id="PR:Q61107"/>
<dbReference type="Proteomes" id="UP000000589">
    <property type="component" value="Chromosome 3"/>
</dbReference>
<dbReference type="RNAct" id="Q61107">
    <property type="molecule type" value="protein"/>
</dbReference>
<dbReference type="Bgee" id="ENSMUSG00000028268">
    <property type="expression patterns" value="Expressed in peripheral lymph node and 199 other cell types or tissues"/>
</dbReference>
<dbReference type="ExpressionAtlas" id="Q61107">
    <property type="expression patterns" value="baseline and differential"/>
</dbReference>
<dbReference type="GO" id="GO:0031410">
    <property type="term" value="C:cytoplasmic vesicle"/>
    <property type="evidence" value="ECO:0000314"/>
    <property type="project" value="MGI"/>
</dbReference>
<dbReference type="GO" id="GO:0005829">
    <property type="term" value="C:cytosol"/>
    <property type="evidence" value="ECO:0000314"/>
    <property type="project" value="MGI"/>
</dbReference>
<dbReference type="GO" id="GO:0000139">
    <property type="term" value="C:Golgi membrane"/>
    <property type="evidence" value="ECO:0007669"/>
    <property type="project" value="UniProtKB-SubCell"/>
</dbReference>
<dbReference type="GO" id="GO:0048471">
    <property type="term" value="C:perinuclear region of cytoplasm"/>
    <property type="evidence" value="ECO:0007669"/>
    <property type="project" value="UniProtKB-SubCell"/>
</dbReference>
<dbReference type="GO" id="GO:0020005">
    <property type="term" value="C:symbiont-containing vacuole membrane"/>
    <property type="evidence" value="ECO:0000314"/>
    <property type="project" value="MGI"/>
</dbReference>
<dbReference type="GO" id="GO:0005525">
    <property type="term" value="F:GTP binding"/>
    <property type="evidence" value="ECO:0007669"/>
    <property type="project" value="UniProtKB-KW"/>
</dbReference>
<dbReference type="GO" id="GO:0003924">
    <property type="term" value="F:GTPase activity"/>
    <property type="evidence" value="ECO:0000250"/>
    <property type="project" value="MGI"/>
</dbReference>
<dbReference type="GO" id="GO:0002218">
    <property type="term" value="P:activation of innate immune response"/>
    <property type="evidence" value="ECO:0000315"/>
    <property type="project" value="UniProtKB"/>
</dbReference>
<dbReference type="GO" id="GO:0044406">
    <property type="term" value="P:adhesion of symbiont to host"/>
    <property type="evidence" value="ECO:0000314"/>
    <property type="project" value="MGI"/>
</dbReference>
<dbReference type="GO" id="GO:0035458">
    <property type="term" value="P:cellular response to interferon-beta"/>
    <property type="evidence" value="ECO:0000314"/>
    <property type="project" value="UniProtKB"/>
</dbReference>
<dbReference type="GO" id="GO:0071222">
    <property type="term" value="P:cellular response to lipopolysaccharide"/>
    <property type="evidence" value="ECO:0000315"/>
    <property type="project" value="UniProtKB"/>
</dbReference>
<dbReference type="GO" id="GO:0071356">
    <property type="term" value="P:cellular response to tumor necrosis factor"/>
    <property type="evidence" value="ECO:0000314"/>
    <property type="project" value="UniProtKB"/>
</dbReference>
<dbReference type="GO" id="GO:0071346">
    <property type="term" value="P:cellular response to type II interferon"/>
    <property type="evidence" value="ECO:0000314"/>
    <property type="project" value="MGI"/>
</dbReference>
<dbReference type="GO" id="GO:0051715">
    <property type="term" value="P:cytolysis in another organism"/>
    <property type="evidence" value="ECO:0000315"/>
    <property type="project" value="UniProtKB"/>
</dbReference>
<dbReference type="GO" id="GO:0042742">
    <property type="term" value="P:defense response to bacterium"/>
    <property type="evidence" value="ECO:0000315"/>
    <property type="project" value="UniProtKB"/>
</dbReference>
<dbReference type="GO" id="GO:0050830">
    <property type="term" value="P:defense response to Gram-positive bacterium"/>
    <property type="evidence" value="ECO:0000314"/>
    <property type="project" value="MGI"/>
</dbReference>
<dbReference type="GO" id="GO:0042832">
    <property type="term" value="P:defense response to protozoan"/>
    <property type="evidence" value="ECO:0000314"/>
    <property type="project" value="MGI"/>
</dbReference>
<dbReference type="GO" id="GO:0140639">
    <property type="term" value="P:positive regulation of pyroptotic inflammatory response"/>
    <property type="evidence" value="ECO:0000315"/>
    <property type="project" value="UniProtKB"/>
</dbReference>
<dbReference type="CDD" id="cd01851">
    <property type="entry name" value="GBP"/>
    <property type="match status" value="1"/>
</dbReference>
<dbReference type="CDD" id="cd16269">
    <property type="entry name" value="GBP_C"/>
    <property type="match status" value="1"/>
</dbReference>
<dbReference type="FunFam" id="1.20.1000.10:FF:000001">
    <property type="entry name" value="Guanylate binding protein 1"/>
    <property type="match status" value="1"/>
</dbReference>
<dbReference type="FunFam" id="3.40.50.300:FF:000422">
    <property type="entry name" value="Guanylate-binding protein 1"/>
    <property type="match status" value="1"/>
</dbReference>
<dbReference type="Gene3D" id="1.20.1000.10">
    <property type="entry name" value="Guanylate-binding protein, C-terminal domain"/>
    <property type="match status" value="1"/>
</dbReference>
<dbReference type="Gene3D" id="3.40.50.300">
    <property type="entry name" value="P-loop containing nucleotide triphosphate hydrolases"/>
    <property type="match status" value="1"/>
</dbReference>
<dbReference type="InterPro" id="IPR030386">
    <property type="entry name" value="G_GB1_RHD3_dom"/>
</dbReference>
<dbReference type="InterPro" id="IPR037684">
    <property type="entry name" value="GBP_C"/>
</dbReference>
<dbReference type="InterPro" id="IPR003191">
    <property type="entry name" value="Guanylate-bd/ATL_C"/>
</dbReference>
<dbReference type="InterPro" id="IPR036543">
    <property type="entry name" value="Guanylate-bd_C_sf"/>
</dbReference>
<dbReference type="InterPro" id="IPR015894">
    <property type="entry name" value="Guanylate-bd_N"/>
</dbReference>
<dbReference type="InterPro" id="IPR027417">
    <property type="entry name" value="P-loop_NTPase"/>
</dbReference>
<dbReference type="PANTHER" id="PTHR10751">
    <property type="entry name" value="GUANYLATE BINDING PROTEIN"/>
    <property type="match status" value="1"/>
</dbReference>
<dbReference type="Pfam" id="PF02263">
    <property type="entry name" value="GBP"/>
    <property type="match status" value="1"/>
</dbReference>
<dbReference type="Pfam" id="PF02841">
    <property type="entry name" value="GBP_C"/>
    <property type="match status" value="1"/>
</dbReference>
<dbReference type="SUPFAM" id="SSF48340">
    <property type="entry name" value="Interferon-induced guanylate-binding protein 1 (GBP1), C-terminal domain"/>
    <property type="match status" value="1"/>
</dbReference>
<dbReference type="SUPFAM" id="SSF52540">
    <property type="entry name" value="P-loop containing nucleoside triphosphate hydrolases"/>
    <property type="match status" value="1"/>
</dbReference>
<dbReference type="PROSITE" id="PS51715">
    <property type="entry name" value="G_GB1_RHD3"/>
    <property type="match status" value="1"/>
</dbReference>